<reference key="1">
    <citation type="submission" date="2009-01" db="EMBL/GenBank/DDBJ databases">
        <title>Complete sequence of Chloroflexus sp. Y-400-fl.</title>
        <authorList>
            <consortium name="US DOE Joint Genome Institute"/>
            <person name="Lucas S."/>
            <person name="Copeland A."/>
            <person name="Lapidus A."/>
            <person name="Glavina del Rio T."/>
            <person name="Dalin E."/>
            <person name="Tice H."/>
            <person name="Bruce D."/>
            <person name="Goodwin L."/>
            <person name="Pitluck S."/>
            <person name="Sims D."/>
            <person name="Kiss H."/>
            <person name="Brettin T."/>
            <person name="Detter J.C."/>
            <person name="Han C."/>
            <person name="Larimer F."/>
            <person name="Land M."/>
            <person name="Hauser L."/>
            <person name="Kyrpides N."/>
            <person name="Ovchinnikova G."/>
            <person name="Bryant D.A."/>
            <person name="Richardson P."/>
        </authorList>
    </citation>
    <scope>NUCLEOTIDE SEQUENCE [LARGE SCALE GENOMIC DNA]</scope>
    <source>
        <strain>ATCC 29364 / DSM 637 / Y-400-fl</strain>
    </source>
</reference>
<protein>
    <recommendedName>
        <fullName evidence="1">Large ribosomal subunit protein bL19</fullName>
    </recommendedName>
    <alternativeName>
        <fullName evidence="2">50S ribosomal protein L19</fullName>
    </alternativeName>
</protein>
<comment type="function">
    <text evidence="1">This protein is located at the 30S-50S ribosomal subunit interface and may play a role in the structure and function of the aminoacyl-tRNA binding site.</text>
</comment>
<comment type="similarity">
    <text evidence="1">Belongs to the bacterial ribosomal protein bL19 family.</text>
</comment>
<sequence>MSQQLLEELGRRQYRTDIPEFRVGDTVRVGVKVVEGNRERVQDFEGVVIRRRGEGINENFTVRRIASHGIGVERTFLLHAPRIDSIKVIRQGKVRRAKLYYLRGRAGKAARIRERR</sequence>
<evidence type="ECO:0000255" key="1">
    <source>
        <dbReference type="HAMAP-Rule" id="MF_00402"/>
    </source>
</evidence>
<evidence type="ECO:0000305" key="2"/>
<organism>
    <name type="scientific">Chloroflexus aurantiacus (strain ATCC 29364 / DSM 637 / Y-400-fl)</name>
    <dbReference type="NCBI Taxonomy" id="480224"/>
    <lineage>
        <taxon>Bacteria</taxon>
        <taxon>Bacillati</taxon>
        <taxon>Chloroflexota</taxon>
        <taxon>Chloroflexia</taxon>
        <taxon>Chloroflexales</taxon>
        <taxon>Chloroflexineae</taxon>
        <taxon>Chloroflexaceae</taxon>
        <taxon>Chloroflexus</taxon>
    </lineage>
</organism>
<name>RL19_CHLSY</name>
<accession>B9LE96</accession>
<gene>
    <name evidence="1" type="primary">rplS</name>
    <name type="ordered locus">Chy400_1804</name>
</gene>
<proteinExistence type="inferred from homology"/>
<feature type="chain" id="PRO_1000134563" description="Large ribosomal subunit protein bL19">
    <location>
        <begin position="1"/>
        <end position="116"/>
    </location>
</feature>
<dbReference type="EMBL" id="CP001364">
    <property type="protein sequence ID" value="ACM53212.1"/>
    <property type="molecule type" value="Genomic_DNA"/>
</dbReference>
<dbReference type="SMR" id="B9LE96"/>
<dbReference type="KEGG" id="chl:Chy400_1804"/>
<dbReference type="HOGENOM" id="CLU_103507_2_1_0"/>
<dbReference type="OrthoDB" id="9803541at2"/>
<dbReference type="GO" id="GO:0022625">
    <property type="term" value="C:cytosolic large ribosomal subunit"/>
    <property type="evidence" value="ECO:0007669"/>
    <property type="project" value="TreeGrafter"/>
</dbReference>
<dbReference type="GO" id="GO:0003735">
    <property type="term" value="F:structural constituent of ribosome"/>
    <property type="evidence" value="ECO:0007669"/>
    <property type="project" value="InterPro"/>
</dbReference>
<dbReference type="GO" id="GO:0006412">
    <property type="term" value="P:translation"/>
    <property type="evidence" value="ECO:0007669"/>
    <property type="project" value="UniProtKB-UniRule"/>
</dbReference>
<dbReference type="FunFam" id="2.30.30.790:FF:000001">
    <property type="entry name" value="50S ribosomal protein L19"/>
    <property type="match status" value="1"/>
</dbReference>
<dbReference type="Gene3D" id="2.30.30.790">
    <property type="match status" value="1"/>
</dbReference>
<dbReference type="HAMAP" id="MF_00402">
    <property type="entry name" value="Ribosomal_bL19"/>
    <property type="match status" value="1"/>
</dbReference>
<dbReference type="InterPro" id="IPR001857">
    <property type="entry name" value="Ribosomal_bL19"/>
</dbReference>
<dbReference type="InterPro" id="IPR018257">
    <property type="entry name" value="Ribosomal_bL19_CS"/>
</dbReference>
<dbReference type="InterPro" id="IPR038657">
    <property type="entry name" value="Ribosomal_bL19_sf"/>
</dbReference>
<dbReference type="InterPro" id="IPR008991">
    <property type="entry name" value="Translation_prot_SH3-like_sf"/>
</dbReference>
<dbReference type="NCBIfam" id="TIGR01024">
    <property type="entry name" value="rplS_bact"/>
    <property type="match status" value="1"/>
</dbReference>
<dbReference type="PANTHER" id="PTHR15680:SF9">
    <property type="entry name" value="LARGE RIBOSOMAL SUBUNIT PROTEIN BL19M"/>
    <property type="match status" value="1"/>
</dbReference>
<dbReference type="PANTHER" id="PTHR15680">
    <property type="entry name" value="RIBOSOMAL PROTEIN L19"/>
    <property type="match status" value="1"/>
</dbReference>
<dbReference type="Pfam" id="PF01245">
    <property type="entry name" value="Ribosomal_L19"/>
    <property type="match status" value="1"/>
</dbReference>
<dbReference type="PIRSF" id="PIRSF002191">
    <property type="entry name" value="Ribosomal_L19"/>
    <property type="match status" value="1"/>
</dbReference>
<dbReference type="PRINTS" id="PR00061">
    <property type="entry name" value="RIBOSOMALL19"/>
</dbReference>
<dbReference type="SUPFAM" id="SSF50104">
    <property type="entry name" value="Translation proteins SH3-like domain"/>
    <property type="match status" value="1"/>
</dbReference>
<dbReference type="PROSITE" id="PS01015">
    <property type="entry name" value="RIBOSOMAL_L19"/>
    <property type="match status" value="1"/>
</dbReference>
<keyword id="KW-0687">Ribonucleoprotein</keyword>
<keyword id="KW-0689">Ribosomal protein</keyword>